<reference key="1">
    <citation type="submission" date="2007-02" db="EMBL/GenBank/DDBJ databases">
        <title>Complete sequence of Clostridium thermocellum ATCC 27405.</title>
        <authorList>
            <consortium name="US DOE Joint Genome Institute"/>
            <person name="Copeland A."/>
            <person name="Lucas S."/>
            <person name="Lapidus A."/>
            <person name="Barry K."/>
            <person name="Detter J.C."/>
            <person name="Glavina del Rio T."/>
            <person name="Hammon N."/>
            <person name="Israni S."/>
            <person name="Dalin E."/>
            <person name="Tice H."/>
            <person name="Pitluck S."/>
            <person name="Chertkov O."/>
            <person name="Brettin T."/>
            <person name="Bruce D."/>
            <person name="Han C."/>
            <person name="Tapia R."/>
            <person name="Gilna P."/>
            <person name="Schmutz J."/>
            <person name="Larimer F."/>
            <person name="Land M."/>
            <person name="Hauser L."/>
            <person name="Kyrpides N."/>
            <person name="Mikhailova N."/>
            <person name="Wu J.H.D."/>
            <person name="Newcomb M."/>
            <person name="Richardson P."/>
        </authorList>
    </citation>
    <scope>NUCLEOTIDE SEQUENCE [LARGE SCALE GENOMIC DNA]</scope>
    <source>
        <strain>ATCC 27405 / DSM 1237 / JCM 9322 / NBRC 103400 / NCIMB 10682 / NRRL B-4536 / VPI 7372</strain>
    </source>
</reference>
<reference key="2">
    <citation type="journal article" date="2010" name="FEMS Microbiol. Lett.">
        <title>The unique set of putative membrane-associated anti-sigma factors in Clostridium thermocellum suggests a novel extracellular carbohydrate-sensing mechanism involved in gene regulation.</title>
        <authorList>
            <person name="Kahel-Raifer H."/>
            <person name="Jindou S."/>
            <person name="Bahari L."/>
            <person name="Nataf Y."/>
            <person name="Shoham Y."/>
            <person name="Bayer E.A."/>
            <person name="Borovok I."/>
            <person name="Lamed R."/>
        </authorList>
    </citation>
    <scope>NOMENCLATURE</scope>
    <source>
        <strain>ATCC 27405 / DSM 1237 / JCM 9322 / NBRC 103400 / NCIMB 10682 / NRRL B-4536 / VPI 7372</strain>
    </source>
</reference>
<reference key="3">
    <citation type="journal article" date="2010" name="Proc. Natl. Acad. Sci. U.S.A.">
        <title>Clostridium thermocellum cellulosomal genes are regulated by extracytoplasmic polysaccharides via alternative sigma factors.</title>
        <authorList>
            <person name="Nataf Y."/>
            <person name="Bahari L."/>
            <person name="Kahel-Raifer H."/>
            <person name="Borovok I."/>
            <person name="Lamed R."/>
            <person name="Bayer E.A."/>
            <person name="Sonenshein A.L."/>
            <person name="Shoham Y."/>
        </authorList>
    </citation>
    <scope>FUNCTION</scope>
    <scope>INTERACTION WITH RSGI2</scope>
    <scope>INDUCTION</scope>
</reference>
<dbReference type="EMBL" id="CP000568">
    <property type="protein sequence ID" value="ABN51507.1"/>
    <property type="molecule type" value="Genomic_DNA"/>
</dbReference>
<dbReference type="SMR" id="A3DC28"/>
<dbReference type="DIP" id="DIP-59451N"/>
<dbReference type="IntAct" id="A3DC28">
    <property type="interactions" value="1"/>
</dbReference>
<dbReference type="STRING" id="203119.Cthe_0268"/>
<dbReference type="GeneID" id="35804820"/>
<dbReference type="KEGG" id="cth:Cthe_0268"/>
<dbReference type="eggNOG" id="COG1191">
    <property type="taxonomic scope" value="Bacteria"/>
</dbReference>
<dbReference type="HOGENOM" id="CLU_082361_0_0_9"/>
<dbReference type="OrthoDB" id="3190733at2"/>
<dbReference type="Proteomes" id="UP000002145">
    <property type="component" value="Chromosome"/>
</dbReference>
<dbReference type="GO" id="GO:0005737">
    <property type="term" value="C:cytoplasm"/>
    <property type="evidence" value="ECO:0007669"/>
    <property type="project" value="UniProtKB-SubCell"/>
</dbReference>
<dbReference type="GO" id="GO:0003677">
    <property type="term" value="F:DNA binding"/>
    <property type="evidence" value="ECO:0007669"/>
    <property type="project" value="UniProtKB-UniRule"/>
</dbReference>
<dbReference type="GO" id="GO:0016987">
    <property type="term" value="F:sigma factor activity"/>
    <property type="evidence" value="ECO:0007669"/>
    <property type="project" value="UniProtKB-UniRule"/>
</dbReference>
<dbReference type="GO" id="GO:0006352">
    <property type="term" value="P:DNA-templated transcription initiation"/>
    <property type="evidence" value="ECO:0007669"/>
    <property type="project" value="UniProtKB-UniRule"/>
</dbReference>
<dbReference type="Gene3D" id="1.10.1740.10">
    <property type="match status" value="1"/>
</dbReference>
<dbReference type="HAMAP" id="MF_02064">
    <property type="entry name" value="Sigma70_SigI"/>
    <property type="match status" value="1"/>
</dbReference>
<dbReference type="InterPro" id="IPR014244">
    <property type="entry name" value="RNA_pol_sigma-I"/>
</dbReference>
<dbReference type="InterPro" id="IPR013325">
    <property type="entry name" value="RNA_pol_sigma_r2"/>
</dbReference>
<dbReference type="NCBIfam" id="NF006173">
    <property type="entry name" value="PRK08311.2-1"/>
    <property type="match status" value="1"/>
</dbReference>
<dbReference type="NCBIfam" id="TIGR02895">
    <property type="entry name" value="spore_sigI"/>
    <property type="match status" value="1"/>
</dbReference>
<dbReference type="PIRSF" id="PIRSF038953">
    <property type="entry name" value="SigI"/>
    <property type="match status" value="1"/>
</dbReference>
<dbReference type="SUPFAM" id="SSF88946">
    <property type="entry name" value="Sigma2 domain of RNA polymerase sigma factors"/>
    <property type="match status" value="1"/>
</dbReference>
<name>SIGI2_ACET2</name>
<sequence>MIDLFSPKGKKDTVSTTNKDKSFEDGIVNIINKIKAGDKLLREEFINSYTPYIIRTVSNLTGKYVDVENSDEFSVGLAAFNEAIDSFDEGKNMFFFKFSTLVIKRRLTDYARHNKKHCHVYPFTYFEDKNNSYFEQIHLKSEIDLQNTYEISREIELYEQKLRDFGISLEHLAKCAPKHKDSKSLCIKIAKVIADNKELFSKLERTRNIPKTELLKLLKINKKTIERNRTFIIAAALIFGNDFNLLKDFLDISEPGGDNIERSTK</sequence>
<gene>
    <name evidence="4" type="primary">sigI2</name>
    <name evidence="7" type="ordered locus">Cthe_0268</name>
</gene>
<proteinExistence type="evidence at protein level"/>
<accession>A3DC28</accession>
<evidence type="ECO:0000250" key="1">
    <source>
        <dbReference type="UniProtKB" id="A3DBH0"/>
    </source>
</evidence>
<evidence type="ECO:0000255" key="2">
    <source>
        <dbReference type="HAMAP-Rule" id="MF_02064"/>
    </source>
</evidence>
<evidence type="ECO:0000269" key="3">
    <source>
    </source>
</evidence>
<evidence type="ECO:0000303" key="4">
    <source>
    </source>
</evidence>
<evidence type="ECO:0000305" key="5"/>
<evidence type="ECO:0000305" key="6">
    <source>
    </source>
</evidence>
<evidence type="ECO:0000312" key="7">
    <source>
        <dbReference type="EMBL" id="ABN51507.1"/>
    </source>
</evidence>
<protein>
    <recommendedName>
        <fullName evidence="5">RNA polymerase sigma factor SigI2</fullName>
    </recommendedName>
</protein>
<organism>
    <name type="scientific">Acetivibrio thermocellus (strain ATCC 27405 / DSM 1237 / JCM 9322 / NBRC 103400 / NCIMB 10682 / NRRL B-4536 / VPI 7372)</name>
    <name type="common">Clostridium thermocellum</name>
    <dbReference type="NCBI Taxonomy" id="203119"/>
    <lineage>
        <taxon>Bacteria</taxon>
        <taxon>Bacillati</taxon>
        <taxon>Bacillota</taxon>
        <taxon>Clostridia</taxon>
        <taxon>Eubacteriales</taxon>
        <taxon>Oscillospiraceae</taxon>
        <taxon>Acetivibrio</taxon>
    </lineage>
</organism>
<keyword id="KW-0963">Cytoplasm</keyword>
<keyword id="KW-0238">DNA-binding</keyword>
<keyword id="KW-1185">Reference proteome</keyword>
<keyword id="KW-0731">Sigma factor</keyword>
<keyword id="KW-0804">Transcription</keyword>
<keyword id="KW-0805">Transcription regulation</keyword>
<comment type="function">
    <text evidence="2 6">Sigma factors are initiation factors that promote the attachment of RNA polymerase to specific initiation sites and are then released (By similarity). This sigma factor is involved in regulation of cellulosomal genes via an external polysaccharide-sensing mechanism (Probable).</text>
</comment>
<comment type="activity regulation">
    <text evidence="1 2">Negatively regulated by the anti-sigma-I factor RsgI2 (By similarity). Binding of the polysaccharide substrate to RsgI2 may lead to the release and activation of SigI2 (By similarity).</text>
</comment>
<comment type="subunit">
    <text evidence="2 3">Interacts with RsgI2.</text>
</comment>
<comment type="subcellular location">
    <subcellularLocation>
        <location evidence="2">Cytoplasm</location>
    </subcellularLocation>
</comment>
<comment type="induction">
    <text evidence="3">Up-regulated in the presence of cellulose.</text>
</comment>
<comment type="similarity">
    <text evidence="2">Belongs to the sigma-70 factor family. SigI subfamily.</text>
</comment>
<feature type="chain" id="PRO_0000436516" description="RNA polymerase sigma factor SigI2">
    <location>
        <begin position="1"/>
        <end position="265"/>
    </location>
</feature>
<feature type="DNA-binding region" description="H-T-H motif" evidence="2">
    <location>
        <begin position="211"/>
        <end position="230"/>
    </location>
</feature>
<feature type="short sequence motif" description="Polymerase core binding" evidence="2">
    <location>
        <begin position="71"/>
        <end position="84"/>
    </location>
</feature>